<organism>
    <name type="scientific">Methanocaldococcus jannaschii (strain ATCC 43067 / DSM 2661 / JAL-1 / JCM 10045 / NBRC 100440)</name>
    <name type="common">Methanococcus jannaschii</name>
    <dbReference type="NCBI Taxonomy" id="243232"/>
    <lineage>
        <taxon>Archaea</taxon>
        <taxon>Methanobacteriati</taxon>
        <taxon>Methanobacteriota</taxon>
        <taxon>Methanomada group</taxon>
        <taxon>Methanococci</taxon>
        <taxon>Methanococcales</taxon>
        <taxon>Methanocaldococcaceae</taxon>
        <taxon>Methanocaldococcus</taxon>
    </lineage>
</organism>
<feature type="chain" id="PRO_0000110995" description="Aspartate--tRNA(Asp/Asn) ligase">
    <location>
        <begin position="1"/>
        <end position="438"/>
    </location>
</feature>
<feature type="region of interest" description="Aspartate" evidence="1">
    <location>
        <begin position="198"/>
        <end position="201"/>
    </location>
</feature>
<feature type="binding site" evidence="1">
    <location>
        <position position="176"/>
    </location>
    <ligand>
        <name>L-aspartate</name>
        <dbReference type="ChEBI" id="CHEBI:29991"/>
    </ligand>
</feature>
<feature type="binding site" evidence="1">
    <location>
        <begin position="220"/>
        <end position="222"/>
    </location>
    <ligand>
        <name>ATP</name>
        <dbReference type="ChEBI" id="CHEBI:30616"/>
    </ligand>
</feature>
<feature type="binding site" evidence="1">
    <location>
        <position position="220"/>
    </location>
    <ligand>
        <name>L-aspartate</name>
        <dbReference type="ChEBI" id="CHEBI:29991"/>
    </ligand>
</feature>
<feature type="binding site" evidence="1">
    <location>
        <begin position="228"/>
        <end position="230"/>
    </location>
    <ligand>
        <name>ATP</name>
        <dbReference type="ChEBI" id="CHEBI:30616"/>
    </ligand>
</feature>
<feature type="binding site" evidence="1">
    <location>
        <position position="361"/>
    </location>
    <ligand>
        <name>ATP</name>
        <dbReference type="ChEBI" id="CHEBI:30616"/>
    </ligand>
</feature>
<feature type="binding site" evidence="1">
    <location>
        <position position="361"/>
    </location>
    <ligand>
        <name>Mg(2+)</name>
        <dbReference type="ChEBI" id="CHEBI:18420"/>
        <label>2</label>
    </ligand>
</feature>
<feature type="binding site" evidence="1">
    <location>
        <position position="361"/>
    </location>
    <ligand>
        <name>Mg(2+)</name>
        <dbReference type="ChEBI" id="CHEBI:18420"/>
        <label>3</label>
    </ligand>
</feature>
<feature type="binding site" evidence="1">
    <location>
        <position position="364"/>
    </location>
    <ligand>
        <name>L-aspartate</name>
        <dbReference type="ChEBI" id="CHEBI:29991"/>
    </ligand>
</feature>
<feature type="binding site" evidence="1">
    <location>
        <position position="364"/>
    </location>
    <ligand>
        <name>Mg(2+)</name>
        <dbReference type="ChEBI" id="CHEBI:18420"/>
        <label>2</label>
    </ligand>
</feature>
<feature type="binding site" evidence="1">
    <location>
        <position position="368"/>
    </location>
    <ligand>
        <name>L-aspartate</name>
        <dbReference type="ChEBI" id="CHEBI:29991"/>
    </ligand>
</feature>
<feature type="binding site" evidence="1">
    <location>
        <begin position="409"/>
        <end position="412"/>
    </location>
    <ligand>
        <name>ATP</name>
        <dbReference type="ChEBI" id="CHEBI:30616"/>
    </ligand>
</feature>
<feature type="site" description="Important for tRNA non-discrimination" evidence="1">
    <location>
        <position position="91"/>
    </location>
</feature>
<sequence>MVNKMKWRRTHYSADIKPEMDGQEVIIMGWVHSIRALGKIIFVILRDREGTVQIVAPKQKVGDELFSQIKKLGAEDVIAVKGKVIANEKAPNGFEILPLELEVINTAKRPLPLDPAEKVPAELDTRLENRFLDLRRPKVQAIFKIRSEMLKSVRNTLYNEGFIEVNTPKLVASCTEGGTELFPISYFEREAFLGQSPQLYKQMLMATGLDRVFEIAPIFRAEEHNTRRHLNEATSIDIEMAFADDKDAMDILEKVVYNAFVDVYENRKKEIETLGIEFELPPEKFDRITYDEAIDIANAKGVEISWGEDLSREAEKAIGEEMEGLYFITDWPSEIRPFYTMPDEKNPNICKAFDLMYKDLEISSGAQRIHLYDLLVENIKKKGLNPDGFTYYLEAFKYGMPPHAGWGLGADRFTMVLTQQENIRECVLFPRDRQRLTP</sequence>
<protein>
    <recommendedName>
        <fullName evidence="1">Aspartate--tRNA(Asp/Asn) ligase</fullName>
        <ecNumber evidence="1">6.1.1.23</ecNumber>
    </recommendedName>
    <alternativeName>
        <fullName evidence="1">Aspartyl-tRNA synthetase</fullName>
        <shortName evidence="1">AspRS</shortName>
    </alternativeName>
    <alternativeName>
        <fullName evidence="1">Non-discriminating aspartyl-tRNA synthetase</fullName>
        <shortName evidence="1">ND-AspRS</shortName>
    </alternativeName>
</protein>
<keyword id="KW-0030">Aminoacyl-tRNA synthetase</keyword>
<keyword id="KW-0067">ATP-binding</keyword>
<keyword id="KW-0963">Cytoplasm</keyword>
<keyword id="KW-0436">Ligase</keyword>
<keyword id="KW-0460">Magnesium</keyword>
<keyword id="KW-0479">Metal-binding</keyword>
<keyword id="KW-0547">Nucleotide-binding</keyword>
<keyword id="KW-0648">Protein biosynthesis</keyword>
<keyword id="KW-1185">Reference proteome</keyword>
<comment type="function">
    <text evidence="1">Aspartyl-tRNA synthetase with relaxed tRNA specificity since it is able to aspartylate not only its cognate tRNA(Asp) but also tRNA(Asn). Reaction proceeds in two steps: L-aspartate is first activated by ATP to form Asp-AMP and then transferred to the acceptor end of tRNA(Asp/Asn).</text>
</comment>
<comment type="catalytic activity">
    <reaction evidence="1">
        <text>tRNA(Asx) + L-aspartate + ATP = L-aspartyl-tRNA(Asx) + AMP + diphosphate</text>
        <dbReference type="Rhea" id="RHEA:18349"/>
        <dbReference type="Rhea" id="RHEA-COMP:9710"/>
        <dbReference type="Rhea" id="RHEA-COMP:9711"/>
        <dbReference type="ChEBI" id="CHEBI:29991"/>
        <dbReference type="ChEBI" id="CHEBI:30616"/>
        <dbReference type="ChEBI" id="CHEBI:33019"/>
        <dbReference type="ChEBI" id="CHEBI:78442"/>
        <dbReference type="ChEBI" id="CHEBI:78516"/>
        <dbReference type="ChEBI" id="CHEBI:456215"/>
        <dbReference type="EC" id="6.1.1.23"/>
    </reaction>
</comment>
<comment type="cofactor">
    <cofactor evidence="1">
        <name>Mg(2+)</name>
        <dbReference type="ChEBI" id="CHEBI:18420"/>
    </cofactor>
    <text evidence="1">Binds 3 Mg(2+) cations per subunit. The strongest magnesium site (Mg1) is bound to the beta- and gamma-phosphates of ATP and four water molecules complete its coordination sphere.</text>
</comment>
<comment type="subunit">
    <text evidence="1">Homodimer.</text>
</comment>
<comment type="subcellular location">
    <subcellularLocation>
        <location evidence="1">Cytoplasm</location>
    </subcellularLocation>
</comment>
<comment type="similarity">
    <text evidence="1">Belongs to the class-II aminoacyl-tRNA synthetase family. Type 2 subfamily.</text>
</comment>
<gene>
    <name evidence="1" type="primary">aspS</name>
    <name type="ordered locus">MJ1555</name>
</gene>
<name>SYDND_METJA</name>
<reference key="1">
    <citation type="journal article" date="1996" name="Science">
        <title>Complete genome sequence of the methanogenic archaeon, Methanococcus jannaschii.</title>
        <authorList>
            <person name="Bult C.J."/>
            <person name="White O."/>
            <person name="Olsen G.J."/>
            <person name="Zhou L."/>
            <person name="Fleischmann R.D."/>
            <person name="Sutton G.G."/>
            <person name="Blake J.A."/>
            <person name="FitzGerald L.M."/>
            <person name="Clayton R.A."/>
            <person name="Gocayne J.D."/>
            <person name="Kerlavage A.R."/>
            <person name="Dougherty B.A."/>
            <person name="Tomb J.-F."/>
            <person name="Adams M.D."/>
            <person name="Reich C.I."/>
            <person name="Overbeek R."/>
            <person name="Kirkness E.F."/>
            <person name="Weinstock K.G."/>
            <person name="Merrick J.M."/>
            <person name="Glodek A."/>
            <person name="Scott J.L."/>
            <person name="Geoghagen N.S.M."/>
            <person name="Weidman J.F."/>
            <person name="Fuhrmann J.L."/>
            <person name="Nguyen D."/>
            <person name="Utterback T.R."/>
            <person name="Kelley J.M."/>
            <person name="Peterson J.D."/>
            <person name="Sadow P.W."/>
            <person name="Hanna M.C."/>
            <person name="Cotton M.D."/>
            <person name="Roberts K.M."/>
            <person name="Hurst M.A."/>
            <person name="Kaine B.P."/>
            <person name="Borodovsky M."/>
            <person name="Klenk H.-P."/>
            <person name="Fraser C.M."/>
            <person name="Smith H.O."/>
            <person name="Woese C.R."/>
            <person name="Venter J.C."/>
        </authorList>
    </citation>
    <scope>NUCLEOTIDE SEQUENCE [LARGE SCALE GENOMIC DNA]</scope>
    <source>
        <strain>ATCC 43067 / DSM 2661 / JAL-1 / JCM 10045 / NBRC 100440</strain>
    </source>
</reference>
<dbReference type="EC" id="6.1.1.23" evidence="1"/>
<dbReference type="EMBL" id="L77117">
    <property type="protein sequence ID" value="AAB99575.1"/>
    <property type="molecule type" value="Genomic_DNA"/>
</dbReference>
<dbReference type="PIR" id="B64494">
    <property type="entry name" value="B64494"/>
</dbReference>
<dbReference type="SMR" id="Q58950"/>
<dbReference type="FunCoup" id="Q58950">
    <property type="interactions" value="264"/>
</dbReference>
<dbReference type="STRING" id="243232.MJ_1555"/>
<dbReference type="PaxDb" id="243232-MJ_1555"/>
<dbReference type="EnsemblBacteria" id="AAB99575">
    <property type="protein sequence ID" value="AAB99575"/>
    <property type="gene ID" value="MJ_1555"/>
</dbReference>
<dbReference type="KEGG" id="mja:MJ_1555"/>
<dbReference type="eggNOG" id="arCOG00406">
    <property type="taxonomic scope" value="Archaea"/>
</dbReference>
<dbReference type="HOGENOM" id="CLU_004553_2_1_2"/>
<dbReference type="InParanoid" id="Q58950"/>
<dbReference type="PhylomeDB" id="Q58950"/>
<dbReference type="Proteomes" id="UP000000805">
    <property type="component" value="Chromosome"/>
</dbReference>
<dbReference type="GO" id="GO:0017101">
    <property type="term" value="C:aminoacyl-tRNA synthetase multienzyme complex"/>
    <property type="evidence" value="ECO:0000318"/>
    <property type="project" value="GO_Central"/>
</dbReference>
<dbReference type="GO" id="GO:0005829">
    <property type="term" value="C:cytosol"/>
    <property type="evidence" value="ECO:0000318"/>
    <property type="project" value="GO_Central"/>
</dbReference>
<dbReference type="GO" id="GO:0004815">
    <property type="term" value="F:aspartate-tRNA ligase activity"/>
    <property type="evidence" value="ECO:0000318"/>
    <property type="project" value="GO_Central"/>
</dbReference>
<dbReference type="GO" id="GO:0050560">
    <property type="term" value="F:aspartate-tRNA(Asn) ligase activity"/>
    <property type="evidence" value="ECO:0007669"/>
    <property type="project" value="UniProtKB-EC"/>
</dbReference>
<dbReference type="GO" id="GO:0005524">
    <property type="term" value="F:ATP binding"/>
    <property type="evidence" value="ECO:0007669"/>
    <property type="project" value="UniProtKB-UniRule"/>
</dbReference>
<dbReference type="GO" id="GO:0000287">
    <property type="term" value="F:magnesium ion binding"/>
    <property type="evidence" value="ECO:0007669"/>
    <property type="project" value="UniProtKB-UniRule"/>
</dbReference>
<dbReference type="GO" id="GO:0003723">
    <property type="term" value="F:RNA binding"/>
    <property type="evidence" value="ECO:0000318"/>
    <property type="project" value="GO_Central"/>
</dbReference>
<dbReference type="GO" id="GO:0006422">
    <property type="term" value="P:aspartyl-tRNA aminoacylation"/>
    <property type="evidence" value="ECO:0000318"/>
    <property type="project" value="GO_Central"/>
</dbReference>
<dbReference type="CDD" id="cd00776">
    <property type="entry name" value="AsxRS_core"/>
    <property type="match status" value="1"/>
</dbReference>
<dbReference type="CDD" id="cd04316">
    <property type="entry name" value="ND_PkAspRS_like_N"/>
    <property type="match status" value="1"/>
</dbReference>
<dbReference type="FunFam" id="3.30.930.10:FF:000038">
    <property type="entry name" value="Aspartate--tRNA ligase"/>
    <property type="match status" value="1"/>
</dbReference>
<dbReference type="FunFam" id="2.40.50.140:FF:000324">
    <property type="entry name" value="Aspartate--tRNA(Asp/Asn) ligase"/>
    <property type="match status" value="1"/>
</dbReference>
<dbReference type="Gene3D" id="3.30.930.10">
    <property type="entry name" value="Bira Bifunctional Protein, Domain 2"/>
    <property type="match status" value="1"/>
</dbReference>
<dbReference type="Gene3D" id="2.40.50.140">
    <property type="entry name" value="Nucleic acid-binding proteins"/>
    <property type="match status" value="1"/>
</dbReference>
<dbReference type="HAMAP" id="MF_02075">
    <property type="entry name" value="Asp_tRNA_synth_type2"/>
    <property type="match status" value="1"/>
</dbReference>
<dbReference type="InterPro" id="IPR004364">
    <property type="entry name" value="Aa-tRNA-synt_II"/>
</dbReference>
<dbReference type="InterPro" id="IPR006195">
    <property type="entry name" value="aa-tRNA-synth_II"/>
</dbReference>
<dbReference type="InterPro" id="IPR045864">
    <property type="entry name" value="aa-tRNA-synth_II/BPL/LPL"/>
</dbReference>
<dbReference type="InterPro" id="IPR004523">
    <property type="entry name" value="Asp-tRNA_synthase_2"/>
</dbReference>
<dbReference type="InterPro" id="IPR002312">
    <property type="entry name" value="Asp/Asn-tRNA-synth_IIb"/>
</dbReference>
<dbReference type="InterPro" id="IPR012340">
    <property type="entry name" value="NA-bd_OB-fold"/>
</dbReference>
<dbReference type="InterPro" id="IPR004365">
    <property type="entry name" value="NA-bd_OB_tRNA"/>
</dbReference>
<dbReference type="NCBIfam" id="TIGR00458">
    <property type="entry name" value="aspS_nondisc"/>
    <property type="match status" value="1"/>
</dbReference>
<dbReference type="NCBIfam" id="NF003483">
    <property type="entry name" value="PRK05159.1"/>
    <property type="match status" value="1"/>
</dbReference>
<dbReference type="PANTHER" id="PTHR43450:SF1">
    <property type="entry name" value="ASPARTATE--TRNA LIGASE, CYTOPLASMIC"/>
    <property type="match status" value="1"/>
</dbReference>
<dbReference type="PANTHER" id="PTHR43450">
    <property type="entry name" value="ASPARTYL-TRNA SYNTHETASE"/>
    <property type="match status" value="1"/>
</dbReference>
<dbReference type="Pfam" id="PF00152">
    <property type="entry name" value="tRNA-synt_2"/>
    <property type="match status" value="1"/>
</dbReference>
<dbReference type="Pfam" id="PF01336">
    <property type="entry name" value="tRNA_anti-codon"/>
    <property type="match status" value="1"/>
</dbReference>
<dbReference type="PRINTS" id="PR01042">
    <property type="entry name" value="TRNASYNTHASP"/>
</dbReference>
<dbReference type="SUPFAM" id="SSF55681">
    <property type="entry name" value="Class II aaRS and biotin synthetases"/>
    <property type="match status" value="1"/>
</dbReference>
<dbReference type="SUPFAM" id="SSF50249">
    <property type="entry name" value="Nucleic acid-binding proteins"/>
    <property type="match status" value="1"/>
</dbReference>
<dbReference type="PROSITE" id="PS50862">
    <property type="entry name" value="AA_TRNA_LIGASE_II"/>
    <property type="match status" value="1"/>
</dbReference>
<evidence type="ECO:0000255" key="1">
    <source>
        <dbReference type="HAMAP-Rule" id="MF_02075"/>
    </source>
</evidence>
<proteinExistence type="inferred from homology"/>
<accession>Q58950</accession>